<keyword id="KW-0418">Kinase</keyword>
<keyword id="KW-0547">Nucleotide-binding</keyword>
<keyword id="KW-1185">Reference proteome</keyword>
<keyword id="KW-0723">Serine/threonine-protein kinase</keyword>
<keyword id="KW-0808">Transferase</keyword>
<organism>
    <name type="scientific">Desulfitobacterium hafniense (strain Y51)</name>
    <dbReference type="NCBI Taxonomy" id="138119"/>
    <lineage>
        <taxon>Bacteria</taxon>
        <taxon>Bacillati</taxon>
        <taxon>Bacillota</taxon>
        <taxon>Clostridia</taxon>
        <taxon>Eubacteriales</taxon>
        <taxon>Desulfitobacteriaceae</taxon>
        <taxon>Desulfitobacterium</taxon>
    </lineage>
</organism>
<comment type="function">
    <text evidence="1">Bifunctional serine/threonine kinase and phosphorylase involved in the regulation of the pyruvate, phosphate dikinase (PPDK) by catalyzing its phosphorylation/dephosphorylation.</text>
</comment>
<comment type="catalytic activity">
    <reaction evidence="1">
        <text>N(tele)-phospho-L-histidyl/L-threonyl-[pyruvate, phosphate dikinase] + ADP = N(tele)-phospho-L-histidyl/O-phospho-L-threonyl-[pyruvate, phosphate dikinase] + AMP + H(+)</text>
        <dbReference type="Rhea" id="RHEA:43692"/>
        <dbReference type="Rhea" id="RHEA-COMP:10650"/>
        <dbReference type="Rhea" id="RHEA-COMP:10651"/>
        <dbReference type="ChEBI" id="CHEBI:15378"/>
        <dbReference type="ChEBI" id="CHEBI:30013"/>
        <dbReference type="ChEBI" id="CHEBI:61977"/>
        <dbReference type="ChEBI" id="CHEBI:83586"/>
        <dbReference type="ChEBI" id="CHEBI:456215"/>
        <dbReference type="ChEBI" id="CHEBI:456216"/>
        <dbReference type="EC" id="2.7.11.32"/>
    </reaction>
</comment>
<comment type="catalytic activity">
    <reaction evidence="1">
        <text>N(tele)-phospho-L-histidyl/O-phospho-L-threonyl-[pyruvate, phosphate dikinase] + phosphate + H(+) = N(tele)-phospho-L-histidyl/L-threonyl-[pyruvate, phosphate dikinase] + diphosphate</text>
        <dbReference type="Rhea" id="RHEA:43696"/>
        <dbReference type="Rhea" id="RHEA-COMP:10650"/>
        <dbReference type="Rhea" id="RHEA-COMP:10651"/>
        <dbReference type="ChEBI" id="CHEBI:15378"/>
        <dbReference type="ChEBI" id="CHEBI:30013"/>
        <dbReference type="ChEBI" id="CHEBI:33019"/>
        <dbReference type="ChEBI" id="CHEBI:43474"/>
        <dbReference type="ChEBI" id="CHEBI:61977"/>
        <dbReference type="ChEBI" id="CHEBI:83586"/>
        <dbReference type="EC" id="2.7.4.27"/>
    </reaction>
</comment>
<comment type="similarity">
    <text evidence="1">Belongs to the pyruvate, phosphate/water dikinase regulatory protein family. PDRP subfamily.</text>
</comment>
<name>PDRP_DESHY</name>
<evidence type="ECO:0000255" key="1">
    <source>
        <dbReference type="HAMAP-Rule" id="MF_00921"/>
    </source>
</evidence>
<reference key="1">
    <citation type="journal article" date="2006" name="J. Bacteriol.">
        <title>Complete genome sequence of the dehalorespiring bacterium Desulfitobacterium hafniense Y51 and comparison with Dehalococcoides ethenogenes 195.</title>
        <authorList>
            <person name="Nonaka H."/>
            <person name="Keresztes G."/>
            <person name="Shinoda Y."/>
            <person name="Ikenaga Y."/>
            <person name="Abe M."/>
            <person name="Naito K."/>
            <person name="Inatomi K."/>
            <person name="Furukawa K."/>
            <person name="Inui M."/>
            <person name="Yukawa H."/>
        </authorList>
    </citation>
    <scope>NUCLEOTIDE SEQUENCE [LARGE SCALE GENOMIC DNA]</scope>
    <source>
        <strain>Y51</strain>
    </source>
</reference>
<protein>
    <recommendedName>
        <fullName evidence="1">Putative pyruvate, phosphate dikinase regulatory protein</fullName>
        <shortName evidence="1">PPDK regulatory protein</shortName>
        <ecNumber evidence="1">2.7.11.32</ecNumber>
        <ecNumber evidence="1">2.7.4.27</ecNumber>
    </recommendedName>
</protein>
<accession>Q24SX2</accession>
<dbReference type="EC" id="2.7.11.32" evidence="1"/>
<dbReference type="EC" id="2.7.4.27" evidence="1"/>
<dbReference type="EMBL" id="AP008230">
    <property type="protein sequence ID" value="BAE84870.1"/>
    <property type="molecule type" value="Genomic_DNA"/>
</dbReference>
<dbReference type="RefSeq" id="WP_011460836.1">
    <property type="nucleotide sequence ID" value="NC_007907.1"/>
</dbReference>
<dbReference type="SMR" id="Q24SX2"/>
<dbReference type="STRING" id="138119.DSY3081"/>
<dbReference type="KEGG" id="dsy:DSY3081"/>
<dbReference type="eggNOG" id="COG1806">
    <property type="taxonomic scope" value="Bacteria"/>
</dbReference>
<dbReference type="HOGENOM" id="CLU_046206_2_1_9"/>
<dbReference type="Proteomes" id="UP000001946">
    <property type="component" value="Chromosome"/>
</dbReference>
<dbReference type="GO" id="GO:0043531">
    <property type="term" value="F:ADP binding"/>
    <property type="evidence" value="ECO:0007669"/>
    <property type="project" value="UniProtKB-UniRule"/>
</dbReference>
<dbReference type="GO" id="GO:0005524">
    <property type="term" value="F:ATP binding"/>
    <property type="evidence" value="ECO:0007669"/>
    <property type="project" value="InterPro"/>
</dbReference>
<dbReference type="GO" id="GO:0016776">
    <property type="term" value="F:phosphotransferase activity, phosphate group as acceptor"/>
    <property type="evidence" value="ECO:0007669"/>
    <property type="project" value="UniProtKB-UniRule"/>
</dbReference>
<dbReference type="GO" id="GO:0004674">
    <property type="term" value="F:protein serine/threonine kinase activity"/>
    <property type="evidence" value="ECO:0007669"/>
    <property type="project" value="UniProtKB-UniRule"/>
</dbReference>
<dbReference type="HAMAP" id="MF_00921">
    <property type="entry name" value="PDRP"/>
    <property type="match status" value="1"/>
</dbReference>
<dbReference type="InterPro" id="IPR005177">
    <property type="entry name" value="Kinase-pyrophosphorylase"/>
</dbReference>
<dbReference type="InterPro" id="IPR026565">
    <property type="entry name" value="PPDK_reg"/>
</dbReference>
<dbReference type="NCBIfam" id="NF003742">
    <property type="entry name" value="PRK05339.1"/>
    <property type="match status" value="1"/>
</dbReference>
<dbReference type="PANTHER" id="PTHR31756">
    <property type="entry name" value="PYRUVATE, PHOSPHATE DIKINASE REGULATORY PROTEIN 1, CHLOROPLASTIC"/>
    <property type="match status" value="1"/>
</dbReference>
<dbReference type="PANTHER" id="PTHR31756:SF3">
    <property type="entry name" value="PYRUVATE, PHOSPHATE DIKINASE REGULATORY PROTEIN 1, CHLOROPLASTIC"/>
    <property type="match status" value="1"/>
</dbReference>
<dbReference type="Pfam" id="PF03618">
    <property type="entry name" value="Kinase-PPPase"/>
    <property type="match status" value="1"/>
</dbReference>
<proteinExistence type="inferred from homology"/>
<sequence length="273" mass="30603">MTKEMPVIYIISDALGETAEYVSRAAAAQFSGIRTKIRKVPYVQDEIHIDEILEEAAKEQAIIAYTLVVKKLRNYLEKKAQDYELRTVDILGPLIKMLADQTGLLPSYTPNVTHILDEQYFRKVDAIEFAVKYDDGKDPRGVLLADVVLIGVSRTSKTPLSMYLAHKGIKAANIPLVPEVSPPQELFRVPSQKVIGLTLKPDLLNQIRTERLRTLGLGSSADYANYERIVEELEYARGIMRKVGCPIIDATGKAIEETASRILEILYKGERNV</sequence>
<gene>
    <name type="ordered locus">DSY3081</name>
</gene>
<feature type="chain" id="PRO_0000316666" description="Putative pyruvate, phosphate dikinase regulatory protein">
    <location>
        <begin position="1"/>
        <end position="273"/>
    </location>
</feature>
<feature type="binding site" evidence="1">
    <location>
        <begin position="151"/>
        <end position="158"/>
    </location>
    <ligand>
        <name>ADP</name>
        <dbReference type="ChEBI" id="CHEBI:456216"/>
    </ligand>
</feature>